<feature type="signal peptide" evidence="3">
    <location>
        <begin position="1"/>
        <end position="24"/>
    </location>
</feature>
<feature type="chain" id="PRO_0000240356" description="Prolyl 3-hydroxylase 2">
    <location>
        <begin position="25"/>
        <end position="708"/>
    </location>
</feature>
<feature type="repeat" description="TPR 1">
    <location>
        <begin position="44"/>
        <end position="77"/>
    </location>
</feature>
<feature type="repeat" description="TPR 2">
    <location>
        <begin position="148"/>
        <end position="181"/>
    </location>
</feature>
<feature type="repeat" description="TPR 3">
    <location>
        <begin position="210"/>
        <end position="243"/>
    </location>
</feature>
<feature type="repeat" description="TPR 4">
    <location>
        <begin position="306"/>
        <end position="339"/>
    </location>
</feature>
<feature type="domain" description="Fe2OG dioxygenase" evidence="4">
    <location>
        <begin position="557"/>
        <end position="671"/>
    </location>
</feature>
<feature type="short sequence motif" description="Prevents secretion from ER" evidence="5">
    <location>
        <begin position="705"/>
        <end position="708"/>
    </location>
</feature>
<feature type="active site" evidence="1">
    <location>
        <position position="662"/>
    </location>
</feature>
<feature type="binding site">
    <location>
        <position position="580"/>
    </location>
    <ligand>
        <name>Fe cation</name>
        <dbReference type="ChEBI" id="CHEBI:24875"/>
    </ligand>
</feature>
<feature type="binding site">
    <location>
        <position position="582"/>
    </location>
    <ligand>
        <name>Fe cation</name>
        <dbReference type="ChEBI" id="CHEBI:24875"/>
    </ligand>
</feature>
<feature type="binding site">
    <location>
        <position position="652"/>
    </location>
    <ligand>
        <name>Fe cation</name>
        <dbReference type="ChEBI" id="CHEBI:24875"/>
    </ligand>
</feature>
<feature type="glycosylation site" description="N-linked (GlcNAc...) asparagine" evidence="3">
    <location>
        <position position="449"/>
    </location>
</feature>
<feature type="glycosylation site" description="N-linked (GlcNAc...) asparagine" evidence="3">
    <location>
        <position position="549"/>
    </location>
</feature>
<feature type="splice variant" id="VSP_053814" description="In isoform 2." evidence="12">
    <location>
        <begin position="1"/>
        <end position="181"/>
    </location>
</feature>
<feature type="sequence variant" id="VAR_066637" description="In MCVD; loss of function; dbSNP:rs724159988." evidence="9">
    <original>G</original>
    <variation>V</variation>
    <location>
        <position position="508"/>
    </location>
</feature>
<feature type="sequence variant" id="VAR_036123" description="In a breast cancer sample; somatic mutation." evidence="7">
    <original>D</original>
    <variation>N</variation>
    <location>
        <position position="613"/>
    </location>
</feature>
<feature type="sequence conflict" description="In Ref. 3; BAG51712." evidence="12" ref="3">
    <original>R</original>
    <variation>Q</variation>
    <location>
        <position position="477"/>
    </location>
</feature>
<accession>Q8IVL5</accession>
<accession>B3KPK0</accession>
<accession>B3KWI9</accession>
<accession>D3DNV8</accession>
<accession>Q9NVI2</accession>
<protein>
    <recommendedName>
        <fullName evidence="15">Prolyl 3-hydroxylase 2</fullName>
        <ecNumber evidence="8">1.14.11.7</ecNumber>
    </recommendedName>
    <alternativeName>
        <fullName evidence="11">Leprecan-like protein 1</fullName>
    </alternativeName>
    <alternativeName>
        <fullName evidence="10">Myxoid liposarcoma-associated protein 4</fullName>
    </alternativeName>
</protein>
<keyword id="KW-0025">Alternative splicing</keyword>
<keyword id="KW-0223">Dioxygenase</keyword>
<keyword id="KW-0225">Disease variant</keyword>
<keyword id="KW-0256">Endoplasmic reticulum</keyword>
<keyword id="KW-0325">Glycoprotein</keyword>
<keyword id="KW-0333">Golgi apparatus</keyword>
<keyword id="KW-0408">Iron</keyword>
<keyword id="KW-0479">Metal-binding</keyword>
<keyword id="KW-0560">Oxidoreductase</keyword>
<keyword id="KW-1267">Proteomics identification</keyword>
<keyword id="KW-1185">Reference proteome</keyword>
<keyword id="KW-0677">Repeat</keyword>
<keyword id="KW-0703">Sarcoplasmic reticulum</keyword>
<keyword id="KW-0732">Signal</keyword>
<keyword id="KW-0802">TPR repeat</keyword>
<keyword id="KW-0847">Vitamin C</keyword>
<gene>
    <name evidence="15" type="primary">P3H2</name>
    <name evidence="11" type="synonym">LEPREL1</name>
    <name evidence="10" type="synonym">MLAT4</name>
</gene>
<reference key="1">
    <citation type="journal article" date="1999" name="Int. J. Cancer">
        <title>Identification of genes differentially expressed in TLS-CHOP carrying myxoid liposarcomas.</title>
        <authorList>
            <person name="Thelin-Jaernum S."/>
            <person name="Lassen C."/>
            <person name="Panagopoulos I."/>
            <person name="Mandahl N."/>
            <person name="Aaman P."/>
        </authorList>
    </citation>
    <scope>NUCLEOTIDE SEQUENCE [MRNA] (ISOFORM 1)</scope>
    <source>
        <tissue>Liposarcoma</tissue>
    </source>
</reference>
<reference key="2">
    <citation type="journal article" date="2004" name="Biochem. Biophys. Res. Commun.">
        <title>LEPREL1, a novel ER and Golgi resident member of the Leprecan family.</title>
        <authorList>
            <person name="Jaernum S."/>
            <person name="Kjellman C."/>
            <person name="Darabi A."/>
            <person name="Nilsson I."/>
            <person name="Edvardsen K."/>
            <person name="Aaman P."/>
        </authorList>
    </citation>
    <scope>NUCLEOTIDE SEQUENCE [MRNA] (ISOFORM 1)</scope>
    <scope>SUBCELLULAR LOCATION</scope>
    <scope>TISSUE SPECIFICITY</scope>
    <scope>POSSIBLE FUNCTION</scope>
    <source>
        <tissue>Liposarcoma</tissue>
    </source>
</reference>
<reference key="3">
    <citation type="journal article" date="2004" name="Nat. Genet.">
        <title>Complete sequencing and characterization of 21,243 full-length human cDNAs.</title>
        <authorList>
            <person name="Ota T."/>
            <person name="Suzuki Y."/>
            <person name="Nishikawa T."/>
            <person name="Otsuki T."/>
            <person name="Sugiyama T."/>
            <person name="Irie R."/>
            <person name="Wakamatsu A."/>
            <person name="Hayashi K."/>
            <person name="Sato H."/>
            <person name="Nagai K."/>
            <person name="Kimura K."/>
            <person name="Makita H."/>
            <person name="Sekine M."/>
            <person name="Obayashi M."/>
            <person name="Nishi T."/>
            <person name="Shibahara T."/>
            <person name="Tanaka T."/>
            <person name="Ishii S."/>
            <person name="Yamamoto J."/>
            <person name="Saito K."/>
            <person name="Kawai Y."/>
            <person name="Isono Y."/>
            <person name="Nakamura Y."/>
            <person name="Nagahari K."/>
            <person name="Murakami K."/>
            <person name="Yasuda T."/>
            <person name="Iwayanagi T."/>
            <person name="Wagatsuma M."/>
            <person name="Shiratori A."/>
            <person name="Sudo H."/>
            <person name="Hosoiri T."/>
            <person name="Kaku Y."/>
            <person name="Kodaira H."/>
            <person name="Kondo H."/>
            <person name="Sugawara M."/>
            <person name="Takahashi M."/>
            <person name="Kanda K."/>
            <person name="Yokoi T."/>
            <person name="Furuya T."/>
            <person name="Kikkawa E."/>
            <person name="Omura Y."/>
            <person name="Abe K."/>
            <person name="Kamihara K."/>
            <person name="Katsuta N."/>
            <person name="Sato K."/>
            <person name="Tanikawa M."/>
            <person name="Yamazaki M."/>
            <person name="Ninomiya K."/>
            <person name="Ishibashi T."/>
            <person name="Yamashita H."/>
            <person name="Murakawa K."/>
            <person name="Fujimori K."/>
            <person name="Tanai H."/>
            <person name="Kimata M."/>
            <person name="Watanabe M."/>
            <person name="Hiraoka S."/>
            <person name="Chiba Y."/>
            <person name="Ishida S."/>
            <person name="Ono Y."/>
            <person name="Takiguchi S."/>
            <person name="Watanabe S."/>
            <person name="Yosida M."/>
            <person name="Hotuta T."/>
            <person name="Kusano J."/>
            <person name="Kanehori K."/>
            <person name="Takahashi-Fujii A."/>
            <person name="Hara H."/>
            <person name="Tanase T.-O."/>
            <person name="Nomura Y."/>
            <person name="Togiya S."/>
            <person name="Komai F."/>
            <person name="Hara R."/>
            <person name="Takeuchi K."/>
            <person name="Arita M."/>
            <person name="Imose N."/>
            <person name="Musashino K."/>
            <person name="Yuuki H."/>
            <person name="Oshima A."/>
            <person name="Sasaki N."/>
            <person name="Aotsuka S."/>
            <person name="Yoshikawa Y."/>
            <person name="Matsunawa H."/>
            <person name="Ichihara T."/>
            <person name="Shiohata N."/>
            <person name="Sano S."/>
            <person name="Moriya S."/>
            <person name="Momiyama H."/>
            <person name="Satoh N."/>
            <person name="Takami S."/>
            <person name="Terashima Y."/>
            <person name="Suzuki O."/>
            <person name="Nakagawa S."/>
            <person name="Senoh A."/>
            <person name="Mizoguchi H."/>
            <person name="Goto Y."/>
            <person name="Shimizu F."/>
            <person name="Wakebe H."/>
            <person name="Hishigaki H."/>
            <person name="Watanabe T."/>
            <person name="Sugiyama A."/>
            <person name="Takemoto M."/>
            <person name="Kawakami B."/>
            <person name="Yamazaki M."/>
            <person name="Watanabe K."/>
            <person name="Kumagai A."/>
            <person name="Itakura S."/>
            <person name="Fukuzumi Y."/>
            <person name="Fujimori Y."/>
            <person name="Komiyama M."/>
            <person name="Tashiro H."/>
            <person name="Tanigami A."/>
            <person name="Fujiwara T."/>
            <person name="Ono T."/>
            <person name="Yamada K."/>
            <person name="Fujii Y."/>
            <person name="Ozaki K."/>
            <person name="Hirao M."/>
            <person name="Ohmori Y."/>
            <person name="Kawabata A."/>
            <person name="Hikiji T."/>
            <person name="Kobatake N."/>
            <person name="Inagaki H."/>
            <person name="Ikema Y."/>
            <person name="Okamoto S."/>
            <person name="Okitani R."/>
            <person name="Kawakami T."/>
            <person name="Noguchi S."/>
            <person name="Itoh T."/>
            <person name="Shigeta K."/>
            <person name="Senba T."/>
            <person name="Matsumura K."/>
            <person name="Nakajima Y."/>
            <person name="Mizuno T."/>
            <person name="Morinaga M."/>
            <person name="Sasaki M."/>
            <person name="Togashi T."/>
            <person name="Oyama M."/>
            <person name="Hata H."/>
            <person name="Watanabe M."/>
            <person name="Komatsu T."/>
            <person name="Mizushima-Sugano J."/>
            <person name="Satoh T."/>
            <person name="Shirai Y."/>
            <person name="Takahashi Y."/>
            <person name="Nakagawa K."/>
            <person name="Okumura K."/>
            <person name="Nagase T."/>
            <person name="Nomura N."/>
            <person name="Kikuchi H."/>
            <person name="Masuho Y."/>
            <person name="Yamashita R."/>
            <person name="Nakai K."/>
            <person name="Yada T."/>
            <person name="Nakamura Y."/>
            <person name="Ohara O."/>
            <person name="Isogai T."/>
            <person name="Sugano S."/>
        </authorList>
    </citation>
    <scope>NUCLEOTIDE SEQUENCE [LARGE SCALE MRNA] (ISOFORM 1)</scope>
    <source>
        <tissue>Teratocarcinoma</tissue>
        <tissue>Tongue</tissue>
    </source>
</reference>
<reference key="4">
    <citation type="journal article" date="2006" name="Nature">
        <title>The DNA sequence, annotation and analysis of human chromosome 3.</title>
        <authorList>
            <person name="Muzny D.M."/>
            <person name="Scherer S.E."/>
            <person name="Kaul R."/>
            <person name="Wang J."/>
            <person name="Yu J."/>
            <person name="Sudbrak R."/>
            <person name="Buhay C.J."/>
            <person name="Chen R."/>
            <person name="Cree A."/>
            <person name="Ding Y."/>
            <person name="Dugan-Rocha S."/>
            <person name="Gill R."/>
            <person name="Gunaratne P."/>
            <person name="Harris R.A."/>
            <person name="Hawes A.C."/>
            <person name="Hernandez J."/>
            <person name="Hodgson A.V."/>
            <person name="Hume J."/>
            <person name="Jackson A."/>
            <person name="Khan Z.M."/>
            <person name="Kovar-Smith C."/>
            <person name="Lewis L.R."/>
            <person name="Lozado R.J."/>
            <person name="Metzker M.L."/>
            <person name="Milosavljevic A."/>
            <person name="Miner G.R."/>
            <person name="Morgan M.B."/>
            <person name="Nazareth L.V."/>
            <person name="Scott G."/>
            <person name="Sodergren E."/>
            <person name="Song X.-Z."/>
            <person name="Steffen D."/>
            <person name="Wei S."/>
            <person name="Wheeler D.A."/>
            <person name="Wright M.W."/>
            <person name="Worley K.C."/>
            <person name="Yuan Y."/>
            <person name="Zhang Z."/>
            <person name="Adams C.Q."/>
            <person name="Ansari-Lari M.A."/>
            <person name="Ayele M."/>
            <person name="Brown M.J."/>
            <person name="Chen G."/>
            <person name="Chen Z."/>
            <person name="Clendenning J."/>
            <person name="Clerc-Blankenburg K.P."/>
            <person name="Chen R."/>
            <person name="Chen Z."/>
            <person name="Davis C."/>
            <person name="Delgado O."/>
            <person name="Dinh H.H."/>
            <person name="Dong W."/>
            <person name="Draper H."/>
            <person name="Ernst S."/>
            <person name="Fu G."/>
            <person name="Gonzalez-Garay M.L."/>
            <person name="Garcia D.K."/>
            <person name="Gillett W."/>
            <person name="Gu J."/>
            <person name="Hao B."/>
            <person name="Haugen E."/>
            <person name="Havlak P."/>
            <person name="He X."/>
            <person name="Hennig S."/>
            <person name="Hu S."/>
            <person name="Huang W."/>
            <person name="Jackson L.R."/>
            <person name="Jacob L.S."/>
            <person name="Kelly S.H."/>
            <person name="Kube M."/>
            <person name="Levy R."/>
            <person name="Li Z."/>
            <person name="Liu B."/>
            <person name="Liu J."/>
            <person name="Liu W."/>
            <person name="Lu J."/>
            <person name="Maheshwari M."/>
            <person name="Nguyen B.-V."/>
            <person name="Okwuonu G.O."/>
            <person name="Palmeiri A."/>
            <person name="Pasternak S."/>
            <person name="Perez L.M."/>
            <person name="Phelps K.A."/>
            <person name="Plopper F.J."/>
            <person name="Qiang B."/>
            <person name="Raymond C."/>
            <person name="Rodriguez R."/>
            <person name="Saenphimmachak C."/>
            <person name="Santibanez J."/>
            <person name="Shen H."/>
            <person name="Shen Y."/>
            <person name="Subramanian S."/>
            <person name="Tabor P.E."/>
            <person name="Verduzco D."/>
            <person name="Waldron L."/>
            <person name="Wang J."/>
            <person name="Wang J."/>
            <person name="Wang Q."/>
            <person name="Williams G.A."/>
            <person name="Wong G.K.-S."/>
            <person name="Yao Z."/>
            <person name="Zhang J."/>
            <person name="Zhang X."/>
            <person name="Zhao G."/>
            <person name="Zhou J."/>
            <person name="Zhou Y."/>
            <person name="Nelson D."/>
            <person name="Lehrach H."/>
            <person name="Reinhardt R."/>
            <person name="Naylor S.L."/>
            <person name="Yang H."/>
            <person name="Olson M."/>
            <person name="Weinstock G."/>
            <person name="Gibbs R.A."/>
        </authorList>
    </citation>
    <scope>NUCLEOTIDE SEQUENCE [LARGE SCALE GENOMIC DNA]</scope>
</reference>
<reference key="5">
    <citation type="submission" date="2005-09" db="EMBL/GenBank/DDBJ databases">
        <authorList>
            <person name="Mural R.J."/>
            <person name="Istrail S."/>
            <person name="Sutton G.G."/>
            <person name="Florea L."/>
            <person name="Halpern A.L."/>
            <person name="Mobarry C.M."/>
            <person name="Lippert R."/>
            <person name="Walenz B."/>
            <person name="Shatkay H."/>
            <person name="Dew I."/>
            <person name="Miller J.R."/>
            <person name="Flanigan M.J."/>
            <person name="Edwards N.J."/>
            <person name="Bolanos R."/>
            <person name="Fasulo D."/>
            <person name="Halldorsson B.V."/>
            <person name="Hannenhalli S."/>
            <person name="Turner R."/>
            <person name="Yooseph S."/>
            <person name="Lu F."/>
            <person name="Nusskern D.R."/>
            <person name="Shue B.C."/>
            <person name="Zheng X.H."/>
            <person name="Zhong F."/>
            <person name="Delcher A.L."/>
            <person name="Huson D.H."/>
            <person name="Kravitz S.A."/>
            <person name="Mouchard L."/>
            <person name="Reinert K."/>
            <person name="Remington K.A."/>
            <person name="Clark A.G."/>
            <person name="Waterman M.S."/>
            <person name="Eichler E.E."/>
            <person name="Adams M.D."/>
            <person name="Hunkapiller M.W."/>
            <person name="Myers E.W."/>
            <person name="Venter J.C."/>
        </authorList>
    </citation>
    <scope>NUCLEOTIDE SEQUENCE [LARGE SCALE GENOMIC DNA]</scope>
</reference>
<reference key="6">
    <citation type="journal article" date="2004" name="Genome Res.">
        <title>The status, quality, and expansion of the NIH full-length cDNA project: the Mammalian Gene Collection (MGC).</title>
        <authorList>
            <consortium name="The MGC Project Team"/>
        </authorList>
    </citation>
    <scope>NUCLEOTIDE SEQUENCE [LARGE SCALE MRNA] OF 161-708 (ISOFORM 1)</scope>
    <source>
        <tissue>Lung</tissue>
    </source>
</reference>
<reference key="7">
    <citation type="journal article" date="2008" name="J. Biol. Chem.">
        <title>Characterization of recombinant human prolyl 3-hydroxylase isoenzyme 2, an enzyme modifying the basement membrane collagen IV.</title>
        <authorList>
            <person name="Tiainen P."/>
            <person name="Pasanen A."/>
            <person name="Sormunen R."/>
            <person name="Myllyharju J."/>
        </authorList>
    </citation>
    <scope>FUNCTION</scope>
    <scope>CATALYTIC ACTIVITY</scope>
    <scope>BIOPHYSICOCHEMICAL PROPERTIES</scope>
    <scope>COFACTOR</scope>
    <scope>ACTIVITY REGULATION</scope>
    <scope>TISSUE SPECIFICITY</scope>
</reference>
<reference key="8">
    <citation type="journal article" date="2006" name="Science">
        <title>The consensus coding sequences of human breast and colorectal cancers.</title>
        <authorList>
            <person name="Sjoeblom T."/>
            <person name="Jones S."/>
            <person name="Wood L.D."/>
            <person name="Parsons D.W."/>
            <person name="Lin J."/>
            <person name="Barber T.D."/>
            <person name="Mandelker D."/>
            <person name="Leary R.J."/>
            <person name="Ptak J."/>
            <person name="Silliman N."/>
            <person name="Szabo S."/>
            <person name="Buckhaults P."/>
            <person name="Farrell C."/>
            <person name="Meeh P."/>
            <person name="Markowitz S.D."/>
            <person name="Willis J."/>
            <person name="Dawson D."/>
            <person name="Willson J.K.V."/>
            <person name="Gazdar A.F."/>
            <person name="Hartigan J."/>
            <person name="Wu L."/>
            <person name="Liu C."/>
            <person name="Parmigiani G."/>
            <person name="Park B.H."/>
            <person name="Bachman K.E."/>
            <person name="Papadopoulos N."/>
            <person name="Vogelstein B."/>
            <person name="Kinzler K.W."/>
            <person name="Velculescu V.E."/>
        </authorList>
    </citation>
    <scope>VARIANT [LARGE SCALE ANALYSIS] ASN-613</scope>
</reference>
<reference key="9">
    <citation type="journal article" date="2011" name="Am. J. Hum. Genet.">
        <title>High myopia caused by a mutation in LEPREL1, encoding prolyl 3-hydroxylase 2.</title>
        <authorList>
            <person name="Mordechai S."/>
            <person name="Gradstein L."/>
            <person name="Pasanen A."/>
            <person name="Ofir R."/>
            <person name="El Amour K."/>
            <person name="Levy J."/>
            <person name="Belfair N."/>
            <person name="Lifshitz T."/>
            <person name="Joshua S."/>
            <person name="Narkis G."/>
            <person name="Elbedour K."/>
            <person name="Myllyharju J."/>
            <person name="Birk O.S."/>
        </authorList>
    </citation>
    <scope>VARIANT MCVD VAL-508</scope>
    <scope>CHARACTERIZATION OF VARIANT MCVD VAL-508</scope>
</reference>
<comment type="function">
    <text evidence="2 8">Prolyl 3-hydroxylase that catalyzes the post-translational formation of 3-hydroxyproline on collagens (PubMed:18487197). Contributes to proline 3-hydroxylation of collagen COL4A1 and COL1A1 in tendons, the eye sclera and in the eye lens capsule (By similarity). Has high activity with the type IV collagen COL4A1, and lower activity with COL1A1 (PubMed:18487197). Catalyzes hydroxylation of the first Pro in Gly-Pro-Hyp sequences where Hyp is 4-hydroxyproline (PubMed:18487197). Has no activity on substrates that lack 4-hydroxyproline in the third position (PubMed:18487197).</text>
</comment>
<comment type="catalytic activity">
    <reaction evidence="8">
        <text>L-prolyl-[collagen] + 2-oxoglutarate + O2 = trans-3-hydroxy-L-prolyl-[collagen] + succinate + CO2</text>
        <dbReference type="Rhea" id="RHEA:22872"/>
        <dbReference type="Rhea" id="RHEA-COMP:11676"/>
        <dbReference type="Rhea" id="RHEA-COMP:11678"/>
        <dbReference type="ChEBI" id="CHEBI:15379"/>
        <dbReference type="ChEBI" id="CHEBI:16526"/>
        <dbReference type="ChEBI" id="CHEBI:16810"/>
        <dbReference type="ChEBI" id="CHEBI:30031"/>
        <dbReference type="ChEBI" id="CHEBI:50342"/>
        <dbReference type="ChEBI" id="CHEBI:85428"/>
        <dbReference type="EC" id="1.14.11.7"/>
    </reaction>
</comment>
<comment type="cofactor">
    <cofactor evidence="14">
        <name>Fe cation</name>
        <dbReference type="ChEBI" id="CHEBI:24875"/>
    </cofactor>
</comment>
<comment type="cofactor">
    <cofactor evidence="14">
        <name>L-ascorbate</name>
        <dbReference type="ChEBI" id="CHEBI:38290"/>
    </cofactor>
</comment>
<comment type="activity regulation">
    <text evidence="8">Inhibited by pyridine 2,4-dicarboxylate, an analog of 2-oxoglutarate.</text>
</comment>
<comment type="biophysicochemical properties">
    <kinetics>
        <KM evidence="8">80 uM for 2-oxoglutarate</KM>
        <KM evidence="8">110 uM for ascorbate</KM>
        <KM evidence="8">0.5 uM for Fe(2+)</KM>
    </kinetics>
</comment>
<comment type="subcellular location">
    <subcellularLocation>
        <location evidence="5 6">Endoplasmic reticulum</location>
    </subcellularLocation>
    <subcellularLocation>
        <location evidence="13">Sarcoplasmic reticulum</location>
    </subcellularLocation>
    <subcellularLocation>
        <location evidence="6">Golgi apparatus</location>
    </subcellularLocation>
</comment>
<comment type="alternative products">
    <event type="alternative splicing"/>
    <isoform>
        <id>Q8IVL5-1</id>
        <name>1</name>
        <sequence type="displayed"/>
    </isoform>
    <isoform>
        <id>Q8IVL5-2</id>
        <name>2</name>
        <sequence type="described" ref="VSP_053814"/>
    </isoform>
</comment>
<comment type="tissue specificity">
    <text evidence="6 8">Expression localized to the epithelia of bile ducts and to the sacroplasm of heart muscle and skeletal muscle. In the pancreas, localized to a subpopulation of Langerhans islet cells and in the salivary gland, expressed in acinar cells (at protein level) (PubMed:15063763). Expressed in adult heart, placenta, lung, liver, skeletal muscle and kidney (PubMed:15063763, PubMed:18487197). Detected in fetal heart, spleen, lung, liver skeletal muscle and kidney (PubMed:18487197).</text>
</comment>
<comment type="disease" evidence="9">
    <disease id="DI-03289">
        <name>Myopia, high, with cataract and vitreoretinal degeneration</name>
        <acronym>MCVD</acronym>
        <description>A disorder characterized by severe myopia with variable expressivity of cataract and vitreoretinal degeneration. Some patients manifest lens subluxation, lens instability and retinal detachment.</description>
        <dbReference type="MIM" id="614292"/>
    </disease>
    <text>The disease is caused by variants affecting the gene represented in this entry.</text>
</comment>
<comment type="similarity">
    <text evidence="12">Belongs to the leprecan family.</text>
</comment>
<comment type="sequence caution" evidence="12">
    <conflict type="erroneous initiation">
        <sequence resource="EMBL-CDS" id="BAA91769"/>
    </conflict>
    <text>Truncated N-terminus.</text>
</comment>
<sequence>MRERIWAPPLLLLLPLLLPPPLWGGPPDSPRRELELEPGPLQPFDLLYASGAAAYYSGDYERAVRDLEAALRSHRRLREIRTRCARHCAARHPLPPPPPGEGPGAELPLFRSLLGRARCYRSCETQRLGGPASRHRVSEDVRSDFQRRVPYNYLQRAYIKLNQLEKAVEAAHTFFVANPEHMEMQQNIENYRATAGVEALQLVDREAKPHMESYNAGVKHYEADDFEMAIRHFEQALREYFVEDTECRTLCEGPQRFEEYEYLGYKAGLYEAIADHYMQVLVCQHECVRELATRPGRLSPIENFLPLHYDYLQFAYYRVGEYVKALECAKAYLLCHPDDEDVLDNVDYYESLLDDSIDPASIEAREDLTMFVKRHKLESELIKSAAEGLGFSYTEPNYWIRYGGRQDENRVPSGVNVEGAEVHGFSMGKKLSPKIDRDLREGGPLLYENITFVYNSEQLNGTQRVLLDNVLSEEQCRELHSVASGIMLVGDGYRGKTSPHTPNEKFEGATVLKALKSGYEGRVPLKSARLFYDISEKARRIVESYFMLNSTLYFSYTHMVCRTALSGQQDRRNDLSHPIHADNCLLDPEANECWKEPPAYTFRDYSALLYMNDDFEGGEFIFTEMDAKTVTASIKPKCGRMISFSSGGENPHGVKAVTKGKRCAVALWFTLDPLYRELERIQADEVIAILDQEQQGKHELNINPKDEL</sequence>
<proteinExistence type="evidence at protein level"/>
<evidence type="ECO:0000250" key="1"/>
<evidence type="ECO:0000250" key="2">
    <source>
        <dbReference type="UniProtKB" id="Q8CG71"/>
    </source>
</evidence>
<evidence type="ECO:0000255" key="3"/>
<evidence type="ECO:0000255" key="4">
    <source>
        <dbReference type="PROSITE-ProRule" id="PRU00805"/>
    </source>
</evidence>
<evidence type="ECO:0000255" key="5">
    <source>
        <dbReference type="PROSITE-ProRule" id="PRU10138"/>
    </source>
</evidence>
<evidence type="ECO:0000269" key="6">
    <source>
    </source>
</evidence>
<evidence type="ECO:0000269" key="7">
    <source>
    </source>
</evidence>
<evidence type="ECO:0000269" key="8">
    <source>
    </source>
</evidence>
<evidence type="ECO:0000269" key="9">
    <source>
    </source>
</evidence>
<evidence type="ECO:0000303" key="10">
    <source>
    </source>
</evidence>
<evidence type="ECO:0000303" key="11">
    <source>
    </source>
</evidence>
<evidence type="ECO:0000305" key="12"/>
<evidence type="ECO:0000305" key="13">
    <source>
    </source>
</evidence>
<evidence type="ECO:0000305" key="14">
    <source>
    </source>
</evidence>
<evidence type="ECO:0000312" key="15">
    <source>
        <dbReference type="HGNC" id="HGNC:19317"/>
    </source>
</evidence>
<name>P3H2_HUMAN</name>
<dbReference type="EC" id="1.14.11.7" evidence="8"/>
<dbReference type="EMBL" id="AJ430351">
    <property type="protein sequence ID" value="CAD23039.2"/>
    <property type="molecule type" value="mRNA"/>
</dbReference>
<dbReference type="EMBL" id="AK001580">
    <property type="protein sequence ID" value="BAA91769.1"/>
    <property type="status" value="ALT_INIT"/>
    <property type="molecule type" value="mRNA"/>
</dbReference>
<dbReference type="EMBL" id="AK056447">
    <property type="protein sequence ID" value="BAG51712.1"/>
    <property type="molecule type" value="mRNA"/>
</dbReference>
<dbReference type="EMBL" id="AK125134">
    <property type="protein sequence ID" value="BAG54151.1"/>
    <property type="molecule type" value="mRNA"/>
</dbReference>
<dbReference type="EMBL" id="AC016966">
    <property type="status" value="NOT_ANNOTATED_CDS"/>
    <property type="molecule type" value="Genomic_DNA"/>
</dbReference>
<dbReference type="EMBL" id="AC063939">
    <property type="status" value="NOT_ANNOTATED_CDS"/>
    <property type="molecule type" value="Genomic_DNA"/>
</dbReference>
<dbReference type="EMBL" id="AC099660">
    <property type="status" value="NOT_ANNOTATED_CDS"/>
    <property type="molecule type" value="Genomic_DNA"/>
</dbReference>
<dbReference type="EMBL" id="CH471052">
    <property type="protein sequence ID" value="EAW78109.1"/>
    <property type="molecule type" value="Genomic_DNA"/>
</dbReference>
<dbReference type="EMBL" id="CH471052">
    <property type="protein sequence ID" value="EAW78110.1"/>
    <property type="molecule type" value="Genomic_DNA"/>
</dbReference>
<dbReference type="EMBL" id="CH471052">
    <property type="protein sequence ID" value="EAW78111.1"/>
    <property type="molecule type" value="Genomic_DNA"/>
</dbReference>
<dbReference type="EMBL" id="BC005029">
    <property type="protein sequence ID" value="AAH05029.1"/>
    <property type="molecule type" value="mRNA"/>
</dbReference>
<dbReference type="CCDS" id="CCDS3294.1">
    <molecule id="Q8IVL5-1"/>
</dbReference>
<dbReference type="CCDS" id="CCDS46981.1">
    <molecule id="Q8IVL5-2"/>
</dbReference>
<dbReference type="RefSeq" id="NP_001127890.1">
    <molecule id="Q8IVL5-2"/>
    <property type="nucleotide sequence ID" value="NM_001134418.2"/>
</dbReference>
<dbReference type="RefSeq" id="NP_060662.2">
    <molecule id="Q8IVL5-1"/>
    <property type="nucleotide sequence ID" value="NM_018192.3"/>
</dbReference>
<dbReference type="RefSeq" id="XP_011511257.1">
    <property type="nucleotide sequence ID" value="XM_011512955.1"/>
</dbReference>
<dbReference type="SMR" id="Q8IVL5"/>
<dbReference type="BioGRID" id="120510">
    <property type="interactions" value="31"/>
</dbReference>
<dbReference type="FunCoup" id="Q8IVL5">
    <property type="interactions" value="1024"/>
</dbReference>
<dbReference type="IntAct" id="Q8IVL5">
    <property type="interactions" value="24"/>
</dbReference>
<dbReference type="STRING" id="9606.ENSP00000316881"/>
<dbReference type="DrugBank" id="DB00126">
    <property type="generic name" value="Ascorbic acid"/>
</dbReference>
<dbReference type="DrugBank" id="DB00172">
    <property type="generic name" value="Proline"/>
</dbReference>
<dbReference type="DrugBank" id="DB00139">
    <property type="generic name" value="Succinic acid"/>
</dbReference>
<dbReference type="GlyCosmos" id="Q8IVL5">
    <property type="glycosylation" value="2 sites, No reported glycans"/>
</dbReference>
<dbReference type="GlyGen" id="Q8IVL5">
    <property type="glycosylation" value="4 sites, 4 N-linked glycans (2 sites), 1 O-linked glycan (1 site)"/>
</dbReference>
<dbReference type="iPTMnet" id="Q8IVL5"/>
<dbReference type="PhosphoSitePlus" id="Q8IVL5"/>
<dbReference type="BioMuta" id="P3H2"/>
<dbReference type="DMDM" id="74714365"/>
<dbReference type="jPOST" id="Q8IVL5"/>
<dbReference type="MassIVE" id="Q8IVL5"/>
<dbReference type="PaxDb" id="9606-ENSP00000316881"/>
<dbReference type="PeptideAtlas" id="Q8IVL5"/>
<dbReference type="ProteomicsDB" id="12740"/>
<dbReference type="ProteomicsDB" id="70737">
    <molecule id="Q8IVL5-1"/>
</dbReference>
<dbReference type="Pumba" id="Q8IVL5"/>
<dbReference type="Antibodypedia" id="1998">
    <property type="antibodies" value="110 antibodies from 20 providers"/>
</dbReference>
<dbReference type="DNASU" id="55214"/>
<dbReference type="Ensembl" id="ENST00000319332.10">
    <molecule id="Q8IVL5-1"/>
    <property type="protein sequence ID" value="ENSP00000316881.5"/>
    <property type="gene ID" value="ENSG00000090530.10"/>
</dbReference>
<dbReference type="Ensembl" id="ENST00000427335.6">
    <molecule id="Q8IVL5-2"/>
    <property type="protein sequence ID" value="ENSP00000408947.2"/>
    <property type="gene ID" value="ENSG00000090530.10"/>
</dbReference>
<dbReference type="GeneID" id="55214"/>
<dbReference type="KEGG" id="hsa:55214"/>
<dbReference type="MANE-Select" id="ENST00000319332.10">
    <property type="protein sequence ID" value="ENSP00000316881.5"/>
    <property type="RefSeq nucleotide sequence ID" value="NM_018192.4"/>
    <property type="RefSeq protein sequence ID" value="NP_060662.2"/>
</dbReference>
<dbReference type="UCSC" id="uc003fsg.4">
    <molecule id="Q8IVL5-1"/>
    <property type="organism name" value="human"/>
</dbReference>
<dbReference type="AGR" id="HGNC:19317"/>
<dbReference type="CTD" id="55214"/>
<dbReference type="DisGeNET" id="55214"/>
<dbReference type="GeneCards" id="P3H2"/>
<dbReference type="HGNC" id="HGNC:19317">
    <property type="gene designation" value="P3H2"/>
</dbReference>
<dbReference type="HPA" id="ENSG00000090530">
    <property type="expression patterns" value="Low tissue specificity"/>
</dbReference>
<dbReference type="MalaCards" id="P3H2"/>
<dbReference type="MIM" id="610341">
    <property type="type" value="gene"/>
</dbReference>
<dbReference type="MIM" id="614292">
    <property type="type" value="phenotype"/>
</dbReference>
<dbReference type="neXtProt" id="NX_Q8IVL5"/>
<dbReference type="OpenTargets" id="ENSG00000090530"/>
<dbReference type="Orphanet" id="98619">
    <property type="disease" value="Rare isolated myopia"/>
</dbReference>
<dbReference type="PharmGKB" id="PA134922807"/>
<dbReference type="VEuPathDB" id="HostDB:ENSG00000090530"/>
<dbReference type="eggNOG" id="KOG4459">
    <property type="taxonomic scope" value="Eukaryota"/>
</dbReference>
<dbReference type="GeneTree" id="ENSGT00940000159593"/>
<dbReference type="HOGENOM" id="CLU_017820_0_0_1"/>
<dbReference type="InParanoid" id="Q8IVL5"/>
<dbReference type="OMA" id="PDDADMW"/>
<dbReference type="OrthoDB" id="8517835at2759"/>
<dbReference type="PAN-GO" id="Q8IVL5">
    <property type="GO annotations" value="3 GO annotations based on evolutionary models"/>
</dbReference>
<dbReference type="PhylomeDB" id="Q8IVL5"/>
<dbReference type="TreeFam" id="TF320837"/>
<dbReference type="BRENDA" id="1.14.11.7">
    <property type="organism ID" value="2681"/>
</dbReference>
<dbReference type="PathwayCommons" id="Q8IVL5"/>
<dbReference type="Reactome" id="R-HSA-1650814">
    <property type="pathway name" value="Collagen biosynthesis and modifying enzymes"/>
</dbReference>
<dbReference type="SignaLink" id="Q8IVL5"/>
<dbReference type="BioGRID-ORCS" id="55214">
    <property type="hits" value="5 hits in 1145 CRISPR screens"/>
</dbReference>
<dbReference type="ChiTaRS" id="P3H2">
    <property type="organism name" value="human"/>
</dbReference>
<dbReference type="GenomeRNAi" id="55214"/>
<dbReference type="Pharos" id="Q8IVL5">
    <property type="development level" value="Tbio"/>
</dbReference>
<dbReference type="PRO" id="PR:Q8IVL5"/>
<dbReference type="Proteomes" id="UP000005640">
    <property type="component" value="Chromosome 3"/>
</dbReference>
<dbReference type="RNAct" id="Q8IVL5">
    <property type="molecule type" value="protein"/>
</dbReference>
<dbReference type="Bgee" id="ENSG00000090530">
    <property type="expression patterns" value="Expressed in adrenal tissue and 138 other cell types or tissues"/>
</dbReference>
<dbReference type="ExpressionAtlas" id="Q8IVL5">
    <property type="expression patterns" value="baseline and differential"/>
</dbReference>
<dbReference type="GO" id="GO:0005604">
    <property type="term" value="C:basement membrane"/>
    <property type="evidence" value="ECO:0000250"/>
    <property type="project" value="UniProtKB"/>
</dbReference>
<dbReference type="GO" id="GO:0005829">
    <property type="term" value="C:cytosol"/>
    <property type="evidence" value="ECO:0000314"/>
    <property type="project" value="HPA"/>
</dbReference>
<dbReference type="GO" id="GO:0005783">
    <property type="term" value="C:endoplasmic reticulum"/>
    <property type="evidence" value="ECO:0000314"/>
    <property type="project" value="UniProtKB"/>
</dbReference>
<dbReference type="GO" id="GO:0005788">
    <property type="term" value="C:endoplasmic reticulum lumen"/>
    <property type="evidence" value="ECO:0000304"/>
    <property type="project" value="Reactome"/>
</dbReference>
<dbReference type="GO" id="GO:0005794">
    <property type="term" value="C:Golgi apparatus"/>
    <property type="evidence" value="ECO:0000314"/>
    <property type="project" value="HPA"/>
</dbReference>
<dbReference type="GO" id="GO:0043231">
    <property type="term" value="C:intracellular membrane-bounded organelle"/>
    <property type="evidence" value="ECO:0000314"/>
    <property type="project" value="HPA"/>
</dbReference>
<dbReference type="GO" id="GO:0005654">
    <property type="term" value="C:nucleoplasm"/>
    <property type="evidence" value="ECO:0000314"/>
    <property type="project" value="HPA"/>
</dbReference>
<dbReference type="GO" id="GO:0016529">
    <property type="term" value="C:sarcoplasmic reticulum"/>
    <property type="evidence" value="ECO:0007669"/>
    <property type="project" value="UniProtKB-SubCell"/>
</dbReference>
<dbReference type="GO" id="GO:0005506">
    <property type="term" value="F:iron ion binding"/>
    <property type="evidence" value="ECO:0007669"/>
    <property type="project" value="InterPro"/>
</dbReference>
<dbReference type="GO" id="GO:0031418">
    <property type="term" value="F:L-ascorbic acid binding"/>
    <property type="evidence" value="ECO:0007669"/>
    <property type="project" value="UniProtKB-KW"/>
</dbReference>
<dbReference type="GO" id="GO:0019797">
    <property type="term" value="F:procollagen-proline 3-dioxygenase activity"/>
    <property type="evidence" value="ECO:0000314"/>
    <property type="project" value="UniProtKB"/>
</dbReference>
<dbReference type="GO" id="GO:0032963">
    <property type="term" value="P:collagen metabolic process"/>
    <property type="evidence" value="ECO:0000314"/>
    <property type="project" value="UniProtKB"/>
</dbReference>
<dbReference type="GO" id="GO:0008285">
    <property type="term" value="P:negative regulation of cell population proliferation"/>
    <property type="evidence" value="ECO:0000314"/>
    <property type="project" value="UniProtKB"/>
</dbReference>
<dbReference type="GO" id="GO:0019511">
    <property type="term" value="P:peptidyl-proline hydroxylation"/>
    <property type="evidence" value="ECO:0000314"/>
    <property type="project" value="UniProtKB"/>
</dbReference>
<dbReference type="FunFam" id="2.60.120.620:FF:000003">
    <property type="entry name" value="Prolyl 3-hydroxylase 2"/>
    <property type="match status" value="1"/>
</dbReference>
<dbReference type="Gene3D" id="2.60.120.620">
    <property type="entry name" value="q2cbj1_9rhob like domain"/>
    <property type="match status" value="1"/>
</dbReference>
<dbReference type="Gene3D" id="1.25.40.10">
    <property type="entry name" value="Tetratricopeptide repeat domain"/>
    <property type="match status" value="2"/>
</dbReference>
<dbReference type="InterPro" id="IPR056585">
    <property type="entry name" value="Leprecan_dom"/>
</dbReference>
<dbReference type="InterPro" id="IPR005123">
    <property type="entry name" value="Oxoglu/Fe-dep_dioxygenase_dom"/>
</dbReference>
<dbReference type="InterPro" id="IPR039575">
    <property type="entry name" value="P3H"/>
</dbReference>
<dbReference type="InterPro" id="IPR006620">
    <property type="entry name" value="Pro_4_hyd_alph"/>
</dbReference>
<dbReference type="InterPro" id="IPR044862">
    <property type="entry name" value="Pro_4_hyd_alph_FE2OG_OXY"/>
</dbReference>
<dbReference type="InterPro" id="IPR011990">
    <property type="entry name" value="TPR-like_helical_dom_sf"/>
</dbReference>
<dbReference type="PANTHER" id="PTHR14049">
    <property type="entry name" value="LEPRECAN 1"/>
    <property type="match status" value="1"/>
</dbReference>
<dbReference type="PANTHER" id="PTHR14049:SF1">
    <property type="entry name" value="PROLYL 3-HYDROXYLASE 2"/>
    <property type="match status" value="1"/>
</dbReference>
<dbReference type="Pfam" id="PF13640">
    <property type="entry name" value="2OG-FeII_Oxy_3"/>
    <property type="match status" value="1"/>
</dbReference>
<dbReference type="Pfam" id="PF23557">
    <property type="entry name" value="TPR_leprecan"/>
    <property type="match status" value="1"/>
</dbReference>
<dbReference type="SMART" id="SM00702">
    <property type="entry name" value="P4Hc"/>
    <property type="match status" value="1"/>
</dbReference>
<dbReference type="SUPFAM" id="SSF48452">
    <property type="entry name" value="TPR-like"/>
    <property type="match status" value="1"/>
</dbReference>
<dbReference type="PROSITE" id="PS00014">
    <property type="entry name" value="ER_TARGET"/>
    <property type="match status" value="1"/>
</dbReference>
<dbReference type="PROSITE" id="PS51471">
    <property type="entry name" value="FE2OG_OXY"/>
    <property type="match status" value="1"/>
</dbReference>
<organism>
    <name type="scientific">Homo sapiens</name>
    <name type="common">Human</name>
    <dbReference type="NCBI Taxonomy" id="9606"/>
    <lineage>
        <taxon>Eukaryota</taxon>
        <taxon>Metazoa</taxon>
        <taxon>Chordata</taxon>
        <taxon>Craniata</taxon>
        <taxon>Vertebrata</taxon>
        <taxon>Euteleostomi</taxon>
        <taxon>Mammalia</taxon>
        <taxon>Eutheria</taxon>
        <taxon>Euarchontoglires</taxon>
        <taxon>Primates</taxon>
        <taxon>Haplorrhini</taxon>
        <taxon>Catarrhini</taxon>
        <taxon>Hominidae</taxon>
        <taxon>Homo</taxon>
    </lineage>
</organism>